<dbReference type="EC" id="2.3.2.27"/>
<dbReference type="EMBL" id="AB008518">
    <property type="protein sequence ID" value="BAA28598.1"/>
    <property type="molecule type" value="mRNA"/>
</dbReference>
<dbReference type="EMBL" id="AF071527">
    <property type="protein sequence ID" value="AAD11593.1"/>
    <property type="molecule type" value="Genomic_DNA"/>
</dbReference>
<dbReference type="EMBL" id="AL161497">
    <property type="protein sequence ID" value="CAB77836.1"/>
    <property type="molecule type" value="Genomic_DNA"/>
</dbReference>
<dbReference type="EMBL" id="CP002687">
    <property type="protein sequence ID" value="AEE82331.1"/>
    <property type="molecule type" value="Genomic_DNA"/>
</dbReference>
<dbReference type="EMBL" id="CP002687">
    <property type="protein sequence ID" value="AEE82332.1"/>
    <property type="molecule type" value="Genomic_DNA"/>
</dbReference>
<dbReference type="EMBL" id="CP002687">
    <property type="protein sequence ID" value="ANM67649.1"/>
    <property type="molecule type" value="Genomic_DNA"/>
</dbReference>
<dbReference type="EMBL" id="CP002687">
    <property type="protein sequence ID" value="ANM67650.1"/>
    <property type="molecule type" value="Genomic_DNA"/>
</dbReference>
<dbReference type="EMBL" id="BT003833">
    <property type="protein sequence ID" value="AAO41884.1"/>
    <property type="molecule type" value="mRNA"/>
</dbReference>
<dbReference type="EMBL" id="BT005188">
    <property type="protein sequence ID" value="AAO50721.1"/>
    <property type="molecule type" value="mRNA"/>
</dbReference>
<dbReference type="PIR" id="T52142">
    <property type="entry name" value="T52142"/>
</dbReference>
<dbReference type="RefSeq" id="NP_001319862.1">
    <property type="nucleotide sequence ID" value="NM_001340463.1"/>
</dbReference>
<dbReference type="RefSeq" id="NP_001329467.1">
    <property type="nucleotide sequence ID" value="NM_001340464.1"/>
</dbReference>
<dbReference type="RefSeq" id="NP_192260.1">
    <property type="nucleotide sequence ID" value="NM_116589.3"/>
</dbReference>
<dbReference type="RefSeq" id="NP_974506.1">
    <property type="nucleotide sequence ID" value="NM_202777.2"/>
</dbReference>
<dbReference type="BioGRID" id="10968">
    <property type="interactions" value="1"/>
</dbReference>
<dbReference type="FunCoup" id="O64425">
    <property type="interactions" value="3"/>
</dbReference>
<dbReference type="IntAct" id="O64425">
    <property type="interactions" value="1"/>
</dbReference>
<dbReference type="STRING" id="3702.O64425"/>
<dbReference type="TCDB" id="3.A.16.1.5">
    <property type="family name" value="the endoplasmic reticular retrotranslocon (er-rt) family"/>
</dbReference>
<dbReference type="iPTMnet" id="O64425"/>
<dbReference type="PaxDb" id="3702-AT4G03510.1"/>
<dbReference type="EnsemblPlants" id="AT4G03510.1">
    <property type="protein sequence ID" value="AT4G03510.1"/>
    <property type="gene ID" value="AT4G03510"/>
</dbReference>
<dbReference type="EnsemblPlants" id="AT4G03510.2">
    <property type="protein sequence ID" value="AT4G03510.2"/>
    <property type="gene ID" value="AT4G03510"/>
</dbReference>
<dbReference type="EnsemblPlants" id="AT4G03510.3">
    <property type="protein sequence ID" value="AT4G03510.3"/>
    <property type="gene ID" value="AT4G03510"/>
</dbReference>
<dbReference type="EnsemblPlants" id="AT4G03510.4">
    <property type="protein sequence ID" value="AT4G03510.4"/>
    <property type="gene ID" value="AT4G03510"/>
</dbReference>
<dbReference type="GeneID" id="825654"/>
<dbReference type="Gramene" id="AT4G03510.1">
    <property type="protein sequence ID" value="AT4G03510.1"/>
    <property type="gene ID" value="AT4G03510"/>
</dbReference>
<dbReference type="Gramene" id="AT4G03510.2">
    <property type="protein sequence ID" value="AT4G03510.2"/>
    <property type="gene ID" value="AT4G03510"/>
</dbReference>
<dbReference type="Gramene" id="AT4G03510.3">
    <property type="protein sequence ID" value="AT4G03510.3"/>
    <property type="gene ID" value="AT4G03510"/>
</dbReference>
<dbReference type="Gramene" id="AT4G03510.4">
    <property type="protein sequence ID" value="AT4G03510.4"/>
    <property type="gene ID" value="AT4G03510"/>
</dbReference>
<dbReference type="KEGG" id="ath:AT4G03510"/>
<dbReference type="Araport" id="AT4G03510"/>
<dbReference type="TAIR" id="AT4G03510">
    <property type="gene designation" value="RMA1"/>
</dbReference>
<dbReference type="eggNOG" id="KOG0823">
    <property type="taxonomic scope" value="Eukaryota"/>
</dbReference>
<dbReference type="HOGENOM" id="CLU_055198_1_0_1"/>
<dbReference type="InParanoid" id="O64425"/>
<dbReference type="OMA" id="RMRRQVM"/>
<dbReference type="PhylomeDB" id="O64425"/>
<dbReference type="BRENDA" id="2.3.2.27">
    <property type="organism ID" value="399"/>
</dbReference>
<dbReference type="UniPathway" id="UPA00143"/>
<dbReference type="PRO" id="PR:O64425"/>
<dbReference type="Proteomes" id="UP000006548">
    <property type="component" value="Chromosome 4"/>
</dbReference>
<dbReference type="ExpressionAtlas" id="O64425">
    <property type="expression patterns" value="baseline and differential"/>
</dbReference>
<dbReference type="GO" id="GO:0005783">
    <property type="term" value="C:endoplasmic reticulum"/>
    <property type="evidence" value="ECO:0000314"/>
    <property type="project" value="TAIR"/>
</dbReference>
<dbReference type="GO" id="GO:0005789">
    <property type="term" value="C:endoplasmic reticulum membrane"/>
    <property type="evidence" value="ECO:0007669"/>
    <property type="project" value="UniProtKB-SubCell"/>
</dbReference>
<dbReference type="GO" id="GO:0016020">
    <property type="term" value="C:membrane"/>
    <property type="evidence" value="ECO:0000314"/>
    <property type="project" value="TAIR"/>
</dbReference>
<dbReference type="GO" id="GO:0061630">
    <property type="term" value="F:ubiquitin protein ligase activity"/>
    <property type="evidence" value="ECO:0007669"/>
    <property type="project" value="InterPro"/>
</dbReference>
<dbReference type="GO" id="GO:0004842">
    <property type="term" value="F:ubiquitin-protein transferase activity"/>
    <property type="evidence" value="ECO:0000314"/>
    <property type="project" value="UniProtKB"/>
</dbReference>
<dbReference type="GO" id="GO:0008270">
    <property type="term" value="F:zinc ion binding"/>
    <property type="evidence" value="ECO:0007669"/>
    <property type="project" value="UniProtKB-KW"/>
</dbReference>
<dbReference type="GO" id="GO:0032527">
    <property type="term" value="P:protein exit from endoplasmic reticulum"/>
    <property type="evidence" value="ECO:0000315"/>
    <property type="project" value="TAIR"/>
</dbReference>
<dbReference type="GO" id="GO:0016567">
    <property type="term" value="P:protein ubiquitination"/>
    <property type="evidence" value="ECO:0007669"/>
    <property type="project" value="UniProtKB-UniPathway"/>
</dbReference>
<dbReference type="GO" id="GO:0006511">
    <property type="term" value="P:ubiquitin-dependent protein catabolic process"/>
    <property type="evidence" value="ECO:0000314"/>
    <property type="project" value="TAIR"/>
</dbReference>
<dbReference type="CDD" id="cd16745">
    <property type="entry name" value="RING-HC_AtRMA-like"/>
    <property type="match status" value="1"/>
</dbReference>
<dbReference type="FunFam" id="3.30.40.10:FF:000968">
    <property type="entry name" value="E3 ubiquitin-protein ligase RMA2"/>
    <property type="match status" value="1"/>
</dbReference>
<dbReference type="Gene3D" id="3.30.40.10">
    <property type="entry name" value="Zinc/RING finger domain, C3HC4 (zinc finger)"/>
    <property type="match status" value="1"/>
</dbReference>
<dbReference type="InterPro" id="IPR045103">
    <property type="entry name" value="RNF5/RNF185-like"/>
</dbReference>
<dbReference type="InterPro" id="IPR018957">
    <property type="entry name" value="Znf_C3HC4_RING-type"/>
</dbReference>
<dbReference type="InterPro" id="IPR001841">
    <property type="entry name" value="Znf_RING"/>
</dbReference>
<dbReference type="InterPro" id="IPR013083">
    <property type="entry name" value="Znf_RING/FYVE/PHD"/>
</dbReference>
<dbReference type="InterPro" id="IPR017907">
    <property type="entry name" value="Znf_RING_CS"/>
</dbReference>
<dbReference type="PANTHER" id="PTHR12313">
    <property type="entry name" value="E3 UBIQUITIN-PROTEIN LIGASE RNF5-RELATED"/>
    <property type="match status" value="1"/>
</dbReference>
<dbReference type="Pfam" id="PF00097">
    <property type="entry name" value="zf-C3HC4"/>
    <property type="match status" value="1"/>
</dbReference>
<dbReference type="SMART" id="SM00184">
    <property type="entry name" value="RING"/>
    <property type="match status" value="1"/>
</dbReference>
<dbReference type="SUPFAM" id="SSF57850">
    <property type="entry name" value="RING/U-box"/>
    <property type="match status" value="1"/>
</dbReference>
<dbReference type="PROSITE" id="PS00518">
    <property type="entry name" value="ZF_RING_1"/>
    <property type="match status" value="1"/>
</dbReference>
<dbReference type="PROSITE" id="PS50089">
    <property type="entry name" value="ZF_RING_2"/>
    <property type="match status" value="1"/>
</dbReference>
<organism>
    <name type="scientific">Arabidopsis thaliana</name>
    <name type="common">Mouse-ear cress</name>
    <dbReference type="NCBI Taxonomy" id="3702"/>
    <lineage>
        <taxon>Eukaryota</taxon>
        <taxon>Viridiplantae</taxon>
        <taxon>Streptophyta</taxon>
        <taxon>Embryophyta</taxon>
        <taxon>Tracheophyta</taxon>
        <taxon>Spermatophyta</taxon>
        <taxon>Magnoliopsida</taxon>
        <taxon>eudicotyledons</taxon>
        <taxon>Gunneridae</taxon>
        <taxon>Pentapetalae</taxon>
        <taxon>rosids</taxon>
        <taxon>malvids</taxon>
        <taxon>Brassicales</taxon>
        <taxon>Brassicaceae</taxon>
        <taxon>Camelineae</taxon>
        <taxon>Arabidopsis</taxon>
    </lineage>
</organism>
<protein>
    <recommendedName>
        <fullName>E3 ubiquitin-protein ligase RMA1</fullName>
        <ecNumber>2.3.2.27</ecNumber>
    </recommendedName>
    <alternativeName>
        <fullName>Protein RING membrane-anchor 1</fullName>
    </alternativeName>
    <alternativeName>
        <fullName evidence="7">RING-type E3 ubiquitin transferase RMA1</fullName>
    </alternativeName>
</protein>
<evidence type="ECO:0000255" key="1"/>
<evidence type="ECO:0000255" key="2">
    <source>
        <dbReference type="PROSITE-ProRule" id="PRU00175"/>
    </source>
</evidence>
<evidence type="ECO:0000269" key="3">
    <source>
    </source>
</evidence>
<evidence type="ECO:0000269" key="4">
    <source>
    </source>
</evidence>
<evidence type="ECO:0000269" key="5">
    <source>
    </source>
</evidence>
<evidence type="ECO:0000269" key="6">
    <source>
    </source>
</evidence>
<evidence type="ECO:0000305" key="7"/>
<reference key="1">
    <citation type="journal article" date="1998" name="Plant Cell Physiol.">
        <title>RMA1, an Arabidopsis thaliana gene whose cDNA suppresses the yeast sec15 mutation, encodes a novel protein with a RING finger motif and a membrane anchor.</title>
        <authorList>
            <person name="Matsuda N."/>
            <person name="Nakano A."/>
        </authorList>
    </citation>
    <scope>NUCLEOTIDE SEQUENCE [MRNA]</scope>
    <scope>MUTAGENESIS OF CYS-63</scope>
    <scope>TISSUE SPECIFICITY</scope>
</reference>
<reference key="2">
    <citation type="journal article" date="1999" name="Nature">
        <title>Sequence and analysis of chromosome 4 of the plant Arabidopsis thaliana.</title>
        <authorList>
            <person name="Mayer K.F.X."/>
            <person name="Schueller C."/>
            <person name="Wambutt R."/>
            <person name="Murphy G."/>
            <person name="Volckaert G."/>
            <person name="Pohl T."/>
            <person name="Duesterhoeft A."/>
            <person name="Stiekema W."/>
            <person name="Entian K.-D."/>
            <person name="Terryn N."/>
            <person name="Harris B."/>
            <person name="Ansorge W."/>
            <person name="Brandt P."/>
            <person name="Grivell L.A."/>
            <person name="Rieger M."/>
            <person name="Weichselgartner M."/>
            <person name="de Simone V."/>
            <person name="Obermaier B."/>
            <person name="Mache R."/>
            <person name="Mueller M."/>
            <person name="Kreis M."/>
            <person name="Delseny M."/>
            <person name="Puigdomenech P."/>
            <person name="Watson M."/>
            <person name="Schmidtheini T."/>
            <person name="Reichert B."/>
            <person name="Portetelle D."/>
            <person name="Perez-Alonso M."/>
            <person name="Boutry M."/>
            <person name="Bancroft I."/>
            <person name="Vos P."/>
            <person name="Hoheisel J."/>
            <person name="Zimmermann W."/>
            <person name="Wedler H."/>
            <person name="Ridley P."/>
            <person name="Langham S.-A."/>
            <person name="McCullagh B."/>
            <person name="Bilham L."/>
            <person name="Robben J."/>
            <person name="van der Schueren J."/>
            <person name="Grymonprez B."/>
            <person name="Chuang Y.-J."/>
            <person name="Vandenbussche F."/>
            <person name="Braeken M."/>
            <person name="Weltjens I."/>
            <person name="Voet M."/>
            <person name="Bastiaens I."/>
            <person name="Aert R."/>
            <person name="Defoor E."/>
            <person name="Weitzenegger T."/>
            <person name="Bothe G."/>
            <person name="Ramsperger U."/>
            <person name="Hilbert H."/>
            <person name="Braun M."/>
            <person name="Holzer E."/>
            <person name="Brandt A."/>
            <person name="Peters S."/>
            <person name="van Staveren M."/>
            <person name="Dirkse W."/>
            <person name="Mooijman P."/>
            <person name="Klein Lankhorst R."/>
            <person name="Rose M."/>
            <person name="Hauf J."/>
            <person name="Koetter P."/>
            <person name="Berneiser S."/>
            <person name="Hempel S."/>
            <person name="Feldpausch M."/>
            <person name="Lamberth S."/>
            <person name="Van den Daele H."/>
            <person name="De Keyser A."/>
            <person name="Buysshaert C."/>
            <person name="Gielen J."/>
            <person name="Villarroel R."/>
            <person name="De Clercq R."/>
            <person name="van Montagu M."/>
            <person name="Rogers J."/>
            <person name="Cronin A."/>
            <person name="Quail M.A."/>
            <person name="Bray-Allen S."/>
            <person name="Clark L."/>
            <person name="Doggett J."/>
            <person name="Hall S."/>
            <person name="Kay M."/>
            <person name="Lennard N."/>
            <person name="McLay K."/>
            <person name="Mayes R."/>
            <person name="Pettett A."/>
            <person name="Rajandream M.A."/>
            <person name="Lyne M."/>
            <person name="Benes V."/>
            <person name="Rechmann S."/>
            <person name="Borkova D."/>
            <person name="Bloecker H."/>
            <person name="Scharfe M."/>
            <person name="Grimm M."/>
            <person name="Loehnert T.-H."/>
            <person name="Dose S."/>
            <person name="de Haan M."/>
            <person name="Maarse A.C."/>
            <person name="Schaefer M."/>
            <person name="Mueller-Auer S."/>
            <person name="Gabel C."/>
            <person name="Fuchs M."/>
            <person name="Fartmann B."/>
            <person name="Granderath K."/>
            <person name="Dauner D."/>
            <person name="Herzl A."/>
            <person name="Neumann S."/>
            <person name="Argiriou A."/>
            <person name="Vitale D."/>
            <person name="Liguori R."/>
            <person name="Piravandi E."/>
            <person name="Massenet O."/>
            <person name="Quigley F."/>
            <person name="Clabauld G."/>
            <person name="Muendlein A."/>
            <person name="Felber R."/>
            <person name="Schnabl S."/>
            <person name="Hiller R."/>
            <person name="Schmidt W."/>
            <person name="Lecharny A."/>
            <person name="Aubourg S."/>
            <person name="Chefdor F."/>
            <person name="Cooke R."/>
            <person name="Berger C."/>
            <person name="Monfort A."/>
            <person name="Casacuberta E."/>
            <person name="Gibbons T."/>
            <person name="Weber N."/>
            <person name="Vandenbol M."/>
            <person name="Bargues M."/>
            <person name="Terol J."/>
            <person name="Torres A."/>
            <person name="Perez-Perez A."/>
            <person name="Purnelle B."/>
            <person name="Bent E."/>
            <person name="Johnson S."/>
            <person name="Tacon D."/>
            <person name="Jesse T."/>
            <person name="Heijnen L."/>
            <person name="Schwarz S."/>
            <person name="Scholler P."/>
            <person name="Heber S."/>
            <person name="Francs P."/>
            <person name="Bielke C."/>
            <person name="Frishman D."/>
            <person name="Haase D."/>
            <person name="Lemcke K."/>
            <person name="Mewes H.-W."/>
            <person name="Stocker S."/>
            <person name="Zaccaria P."/>
            <person name="Bevan M."/>
            <person name="Wilson R.K."/>
            <person name="de la Bastide M."/>
            <person name="Habermann K."/>
            <person name="Parnell L."/>
            <person name="Dedhia N."/>
            <person name="Gnoj L."/>
            <person name="Schutz K."/>
            <person name="Huang E."/>
            <person name="Spiegel L."/>
            <person name="Sekhon M."/>
            <person name="Murray J."/>
            <person name="Sheet P."/>
            <person name="Cordes M."/>
            <person name="Abu-Threideh J."/>
            <person name="Stoneking T."/>
            <person name="Kalicki J."/>
            <person name="Graves T."/>
            <person name="Harmon G."/>
            <person name="Edwards J."/>
            <person name="Latreille P."/>
            <person name="Courtney L."/>
            <person name="Cloud J."/>
            <person name="Abbott A."/>
            <person name="Scott K."/>
            <person name="Johnson D."/>
            <person name="Minx P."/>
            <person name="Bentley D."/>
            <person name="Fulton B."/>
            <person name="Miller N."/>
            <person name="Greco T."/>
            <person name="Kemp K."/>
            <person name="Kramer J."/>
            <person name="Fulton L."/>
            <person name="Mardis E."/>
            <person name="Dante M."/>
            <person name="Pepin K."/>
            <person name="Hillier L.W."/>
            <person name="Nelson J."/>
            <person name="Spieth J."/>
            <person name="Ryan E."/>
            <person name="Andrews S."/>
            <person name="Geisel C."/>
            <person name="Layman D."/>
            <person name="Du H."/>
            <person name="Ali J."/>
            <person name="Berghoff A."/>
            <person name="Jones K."/>
            <person name="Drone K."/>
            <person name="Cotton M."/>
            <person name="Joshu C."/>
            <person name="Antonoiu B."/>
            <person name="Zidanic M."/>
            <person name="Strong C."/>
            <person name="Sun H."/>
            <person name="Lamar B."/>
            <person name="Yordan C."/>
            <person name="Ma P."/>
            <person name="Zhong J."/>
            <person name="Preston R."/>
            <person name="Vil D."/>
            <person name="Shekher M."/>
            <person name="Matero A."/>
            <person name="Shah R."/>
            <person name="Swaby I.K."/>
            <person name="O'Shaughnessy A."/>
            <person name="Rodriguez M."/>
            <person name="Hoffman J."/>
            <person name="Till S."/>
            <person name="Granat S."/>
            <person name="Shohdy N."/>
            <person name="Hasegawa A."/>
            <person name="Hameed A."/>
            <person name="Lodhi M."/>
            <person name="Johnson A."/>
            <person name="Chen E."/>
            <person name="Marra M.A."/>
            <person name="Martienssen R."/>
            <person name="McCombie W.R."/>
        </authorList>
    </citation>
    <scope>NUCLEOTIDE SEQUENCE [LARGE SCALE GENOMIC DNA]</scope>
    <source>
        <strain>cv. Columbia</strain>
    </source>
</reference>
<reference key="3">
    <citation type="journal article" date="2017" name="Plant J.">
        <title>Araport11: a complete reannotation of the Arabidopsis thaliana reference genome.</title>
        <authorList>
            <person name="Cheng C.Y."/>
            <person name="Krishnakumar V."/>
            <person name="Chan A.P."/>
            <person name="Thibaud-Nissen F."/>
            <person name="Schobel S."/>
            <person name="Town C.D."/>
        </authorList>
    </citation>
    <scope>GENOME REANNOTATION</scope>
    <source>
        <strain>cv. Columbia</strain>
    </source>
</reference>
<reference key="4">
    <citation type="journal article" date="2003" name="Science">
        <title>Empirical analysis of transcriptional activity in the Arabidopsis genome.</title>
        <authorList>
            <person name="Yamada K."/>
            <person name="Lim J."/>
            <person name="Dale J.M."/>
            <person name="Chen H."/>
            <person name="Shinn P."/>
            <person name="Palm C.J."/>
            <person name="Southwick A.M."/>
            <person name="Wu H.C."/>
            <person name="Kim C.J."/>
            <person name="Nguyen M."/>
            <person name="Pham P.K."/>
            <person name="Cheuk R.F."/>
            <person name="Karlin-Newmann G."/>
            <person name="Liu S.X."/>
            <person name="Lam B."/>
            <person name="Sakano H."/>
            <person name="Wu T."/>
            <person name="Yu G."/>
            <person name="Miranda M."/>
            <person name="Quach H.L."/>
            <person name="Tripp M."/>
            <person name="Chang C.H."/>
            <person name="Lee J.M."/>
            <person name="Toriumi M.J."/>
            <person name="Chan M.M."/>
            <person name="Tang C.C."/>
            <person name="Onodera C.S."/>
            <person name="Deng J.M."/>
            <person name="Akiyama K."/>
            <person name="Ansari Y."/>
            <person name="Arakawa T."/>
            <person name="Banh J."/>
            <person name="Banno F."/>
            <person name="Bowser L."/>
            <person name="Brooks S.Y."/>
            <person name="Carninci P."/>
            <person name="Chao Q."/>
            <person name="Choy N."/>
            <person name="Enju A."/>
            <person name="Goldsmith A.D."/>
            <person name="Gurjal M."/>
            <person name="Hansen N.F."/>
            <person name="Hayashizaki Y."/>
            <person name="Johnson-Hopson C."/>
            <person name="Hsuan V.W."/>
            <person name="Iida K."/>
            <person name="Karnes M."/>
            <person name="Khan S."/>
            <person name="Koesema E."/>
            <person name="Ishida J."/>
            <person name="Jiang P.X."/>
            <person name="Jones T."/>
            <person name="Kawai J."/>
            <person name="Kamiya A."/>
            <person name="Meyers C."/>
            <person name="Nakajima M."/>
            <person name="Narusaka M."/>
            <person name="Seki M."/>
            <person name="Sakurai T."/>
            <person name="Satou M."/>
            <person name="Tamse R."/>
            <person name="Vaysberg M."/>
            <person name="Wallender E.K."/>
            <person name="Wong C."/>
            <person name="Yamamura Y."/>
            <person name="Yuan S."/>
            <person name="Shinozaki K."/>
            <person name="Davis R.W."/>
            <person name="Theologis A."/>
            <person name="Ecker J.R."/>
        </authorList>
    </citation>
    <scope>NUCLEOTIDE SEQUENCE [LARGE SCALE MRNA]</scope>
    <source>
        <strain>cv. Columbia</strain>
    </source>
</reference>
<reference key="5">
    <citation type="journal article" date="2001" name="J. Cell Sci.">
        <title>Rma1, a novel type of RING finger protein conserved from Arabidopsis to human, is a membrane-bound ubiquitin ligase.</title>
        <authorList>
            <person name="Matsuda N."/>
            <person name="Suzuki T."/>
            <person name="Tanaka K."/>
            <person name="Nakano A."/>
        </authorList>
    </citation>
    <scope>FUNCTION</scope>
    <scope>SUBCELLULAR LOCATION</scope>
</reference>
<reference key="6">
    <citation type="journal article" date="2009" name="Plant Cell Rep.">
        <title>Characterization of three Arabidopsis homologs of human RING membrane anchor E3 ubiquitin ligase.</title>
        <authorList>
            <person name="Son O."/>
            <person name="Cho S.K."/>
            <person name="Kim E.Y."/>
            <person name="Kim W.T."/>
        </authorList>
    </citation>
    <scope>FUNCTION</scope>
    <scope>MUTAGENESIS OF CYS-63</scope>
    <scope>SUBCELLULAR LOCATION</scope>
    <scope>TISSUE SPECIFICITY</scope>
</reference>
<reference key="7">
    <citation type="journal article" date="2009" name="Plant Cell">
        <title>Drought stress-induced Rma1H1, a RING membrane-anchor E3 ubiquitin ligase homolog, regulates aquaporin levels via ubiquitination in transgenic Arabidopsis plants.</title>
        <authorList>
            <person name="Lee H.K."/>
            <person name="Cho S.K."/>
            <person name="Son O."/>
            <person name="Xu Z."/>
            <person name="Hwang I."/>
            <person name="Kim W.T."/>
        </authorList>
    </citation>
    <scope>FUNCTION</scope>
    <scope>SUBCELLULAR LOCATION</scope>
    <scope>DISRUPTION PHENOTYPE</scope>
</reference>
<keyword id="KW-0256">Endoplasmic reticulum</keyword>
<keyword id="KW-0472">Membrane</keyword>
<keyword id="KW-0479">Metal-binding</keyword>
<keyword id="KW-1185">Reference proteome</keyword>
<keyword id="KW-0808">Transferase</keyword>
<keyword id="KW-0812">Transmembrane</keyword>
<keyword id="KW-1133">Transmembrane helix</keyword>
<keyword id="KW-0833">Ubl conjugation pathway</keyword>
<keyword id="KW-0862">Zinc</keyword>
<keyword id="KW-0863">Zinc-finger</keyword>
<sequence length="249" mass="28012">MALDQSFEDAALLGELYGEGAFCFKSKKPEPITVSVPSDDTDDSNFDCNICLDSVQEPVVTLCGHLFCWPCIHKWLDVQSFSTSDEYQRHRQCPVCKSKVSHSTLVPLYGRGRCTTQEEGKNSVPKRPVGPVYRLEMPNSPYASTDLRLSQRVHFNSPQEGYYPVSGVMSSNSLSYSAVLDPVMVMVGEMVATRLFGTRVMDRFAYPDTYNLAGTSGPRMRRRIMQADKSLGRIFFFFMCCVVLCLLLF</sequence>
<accession>O64425</accession>
<proteinExistence type="evidence at protein level"/>
<name>RMA1_ARATH</name>
<gene>
    <name type="primary">RMA1</name>
    <name type="ordered locus">At4g03510</name>
    <name type="ORF">F9H3.14</name>
</gene>
<comment type="function">
    <text evidence="3 4 5">E3 ubiquitin-protein ligase that promotes the ubiquitination and proteasomal degradation of aquaporin PIP2-1. Forms a ubiquitin ligase complex in cooperation with the E2 enzymes UCB8/UCB10.</text>
</comment>
<comment type="catalytic activity">
    <reaction>
        <text>S-ubiquitinyl-[E2 ubiquitin-conjugating enzyme]-L-cysteine + [acceptor protein]-L-lysine = [E2 ubiquitin-conjugating enzyme]-L-cysteine + N(6)-ubiquitinyl-[acceptor protein]-L-lysine.</text>
        <dbReference type="EC" id="2.3.2.27"/>
    </reaction>
</comment>
<comment type="pathway">
    <text>Protein modification; protein ubiquitination.</text>
</comment>
<comment type="subcellular location">
    <subcellularLocation>
        <location evidence="3 4 5">Endoplasmic reticulum membrane</location>
        <topology evidence="3 4 5">Single-pass type IV membrane protein</topology>
    </subcellularLocation>
</comment>
<comment type="tissue specificity">
    <text evidence="4 6">Ubiquitous. Highly expressed in roots.</text>
</comment>
<comment type="domain">
    <text>The RING-type zinc finger domain is required for E3 ligase activity.</text>
</comment>
<comment type="domain">
    <text>The C-terminal transmembrane is dispensable for the ubiquitin ligase activity in vitro, but is critical for correct subcellular localization and substrate recognition in vivo.</text>
</comment>
<comment type="disruption phenotype">
    <text evidence="5">No visible phenotype and no effect on drought stress response, probably due to the redundancy with RMA2 and RMA3.</text>
</comment>
<feature type="chain" id="PRO_0000395673" description="E3 ubiquitin-protein ligase RMA1">
    <location>
        <begin position="1"/>
        <end position="249"/>
    </location>
</feature>
<feature type="transmembrane region" description="Helical; Anchor for type IV membrane protein" evidence="1">
    <location>
        <begin position="231"/>
        <end position="248"/>
    </location>
</feature>
<feature type="zinc finger region" description="RING-type" evidence="2">
    <location>
        <begin position="48"/>
        <end position="97"/>
    </location>
</feature>
<feature type="mutagenesis site" description="Loss of ubiquitin ligase activity." evidence="4 6">
    <original>C</original>
    <variation>S</variation>
    <location>
        <position position="63"/>
    </location>
</feature>